<reference key="1">
    <citation type="journal article" date="2010" name="PLoS ONE">
        <title>The complete multipartite genome sequence of Cupriavidus necator JMP134, a versatile pollutant degrader.</title>
        <authorList>
            <person name="Lykidis A."/>
            <person name="Perez-Pantoja D."/>
            <person name="Ledger T."/>
            <person name="Mavromatis K."/>
            <person name="Anderson I.J."/>
            <person name="Ivanova N.N."/>
            <person name="Hooper S.D."/>
            <person name="Lapidus A."/>
            <person name="Lucas S."/>
            <person name="Gonzalez B."/>
            <person name="Kyrpides N.C."/>
        </authorList>
    </citation>
    <scope>NUCLEOTIDE SEQUENCE [LARGE SCALE GENOMIC DNA]</scope>
    <source>
        <strain>JMP134 / LMG 1197</strain>
    </source>
</reference>
<keyword id="KW-0131">Cell cycle</keyword>
<keyword id="KW-0132">Cell division</keyword>
<keyword id="KW-0997">Cell inner membrane</keyword>
<keyword id="KW-1003">Cell membrane</keyword>
<keyword id="KW-0133">Cell shape</keyword>
<keyword id="KW-0961">Cell wall biogenesis/degradation</keyword>
<keyword id="KW-0460">Magnesium</keyword>
<keyword id="KW-0472">Membrane</keyword>
<keyword id="KW-0479">Metal-binding</keyword>
<keyword id="KW-0573">Peptidoglycan synthesis</keyword>
<keyword id="KW-0808">Transferase</keyword>
<keyword id="KW-0812">Transmembrane</keyword>
<keyword id="KW-1133">Transmembrane helix</keyword>
<evidence type="ECO:0000255" key="1">
    <source>
        <dbReference type="HAMAP-Rule" id="MF_00038"/>
    </source>
</evidence>
<comment type="function">
    <text evidence="1">Catalyzes the initial step of the lipid cycle reactions in the biosynthesis of the cell wall peptidoglycan: transfers peptidoglycan precursor phospho-MurNAc-pentapeptide from UDP-MurNAc-pentapeptide onto the lipid carrier undecaprenyl phosphate, yielding undecaprenyl-pyrophosphoryl-MurNAc-pentapeptide, known as lipid I.</text>
</comment>
<comment type="catalytic activity">
    <reaction evidence="1">
        <text>UDP-N-acetyl-alpha-D-muramoyl-L-alanyl-gamma-D-glutamyl-meso-2,6-diaminopimeloyl-D-alanyl-D-alanine + di-trans,octa-cis-undecaprenyl phosphate = di-trans,octa-cis-undecaprenyl diphospho-N-acetyl-alpha-D-muramoyl-L-alanyl-D-glutamyl-meso-2,6-diaminopimeloyl-D-alanyl-D-alanine + UMP</text>
        <dbReference type="Rhea" id="RHEA:28386"/>
        <dbReference type="ChEBI" id="CHEBI:57865"/>
        <dbReference type="ChEBI" id="CHEBI:60392"/>
        <dbReference type="ChEBI" id="CHEBI:61386"/>
        <dbReference type="ChEBI" id="CHEBI:61387"/>
        <dbReference type="EC" id="2.7.8.13"/>
    </reaction>
</comment>
<comment type="cofactor">
    <cofactor evidence="1">
        <name>Mg(2+)</name>
        <dbReference type="ChEBI" id="CHEBI:18420"/>
    </cofactor>
</comment>
<comment type="pathway">
    <text evidence="1">Cell wall biogenesis; peptidoglycan biosynthesis.</text>
</comment>
<comment type="subcellular location">
    <subcellularLocation>
        <location evidence="1">Cell inner membrane</location>
        <topology evidence="1">Multi-pass membrane protein</topology>
    </subcellularLocation>
</comment>
<comment type="similarity">
    <text evidence="1">Belongs to the glycosyltransferase 4 family. MraY subfamily.</text>
</comment>
<accession>Q46WZ1</accession>
<proteinExistence type="inferred from homology"/>
<gene>
    <name evidence="1" type="primary">mraY</name>
    <name type="ordered locus">Reut_A2982</name>
</gene>
<dbReference type="EC" id="2.7.8.13" evidence="1"/>
<dbReference type="EMBL" id="CP000090">
    <property type="protein sequence ID" value="AAZ62342.1"/>
    <property type="molecule type" value="Genomic_DNA"/>
</dbReference>
<dbReference type="SMR" id="Q46WZ1"/>
<dbReference type="STRING" id="264198.Reut_A2982"/>
<dbReference type="KEGG" id="reu:Reut_A2982"/>
<dbReference type="eggNOG" id="COG0472">
    <property type="taxonomic scope" value="Bacteria"/>
</dbReference>
<dbReference type="HOGENOM" id="CLU_023982_0_0_4"/>
<dbReference type="OrthoDB" id="9805475at2"/>
<dbReference type="UniPathway" id="UPA00219"/>
<dbReference type="GO" id="GO:0005886">
    <property type="term" value="C:plasma membrane"/>
    <property type="evidence" value="ECO:0007669"/>
    <property type="project" value="UniProtKB-SubCell"/>
</dbReference>
<dbReference type="GO" id="GO:0046872">
    <property type="term" value="F:metal ion binding"/>
    <property type="evidence" value="ECO:0007669"/>
    <property type="project" value="UniProtKB-KW"/>
</dbReference>
<dbReference type="GO" id="GO:0008963">
    <property type="term" value="F:phospho-N-acetylmuramoyl-pentapeptide-transferase activity"/>
    <property type="evidence" value="ECO:0007669"/>
    <property type="project" value="UniProtKB-UniRule"/>
</dbReference>
<dbReference type="GO" id="GO:0051992">
    <property type="term" value="F:UDP-N-acetylmuramoyl-L-alanyl-D-glutamyl-meso-2,6-diaminopimelyl-D-alanyl-D-alanine:undecaprenyl-phosphate transferase activity"/>
    <property type="evidence" value="ECO:0007669"/>
    <property type="project" value="RHEA"/>
</dbReference>
<dbReference type="GO" id="GO:0051301">
    <property type="term" value="P:cell division"/>
    <property type="evidence" value="ECO:0007669"/>
    <property type="project" value="UniProtKB-KW"/>
</dbReference>
<dbReference type="GO" id="GO:0071555">
    <property type="term" value="P:cell wall organization"/>
    <property type="evidence" value="ECO:0007669"/>
    <property type="project" value="UniProtKB-KW"/>
</dbReference>
<dbReference type="GO" id="GO:0009252">
    <property type="term" value="P:peptidoglycan biosynthetic process"/>
    <property type="evidence" value="ECO:0007669"/>
    <property type="project" value="UniProtKB-UniRule"/>
</dbReference>
<dbReference type="GO" id="GO:0008360">
    <property type="term" value="P:regulation of cell shape"/>
    <property type="evidence" value="ECO:0007669"/>
    <property type="project" value="UniProtKB-KW"/>
</dbReference>
<dbReference type="CDD" id="cd06852">
    <property type="entry name" value="GT_MraY"/>
    <property type="match status" value="1"/>
</dbReference>
<dbReference type="HAMAP" id="MF_00038">
    <property type="entry name" value="MraY"/>
    <property type="match status" value="1"/>
</dbReference>
<dbReference type="InterPro" id="IPR000715">
    <property type="entry name" value="Glycosyl_transferase_4"/>
</dbReference>
<dbReference type="InterPro" id="IPR003524">
    <property type="entry name" value="PNAcMuramoyl-5peptid_Trfase"/>
</dbReference>
<dbReference type="InterPro" id="IPR018480">
    <property type="entry name" value="PNAcMuramoyl-5peptid_Trfase_CS"/>
</dbReference>
<dbReference type="NCBIfam" id="TIGR00445">
    <property type="entry name" value="mraY"/>
    <property type="match status" value="1"/>
</dbReference>
<dbReference type="PANTHER" id="PTHR22926">
    <property type="entry name" value="PHOSPHO-N-ACETYLMURAMOYL-PENTAPEPTIDE-TRANSFERASE"/>
    <property type="match status" value="1"/>
</dbReference>
<dbReference type="PANTHER" id="PTHR22926:SF5">
    <property type="entry name" value="PHOSPHO-N-ACETYLMURAMOYL-PENTAPEPTIDE-TRANSFERASE HOMOLOG"/>
    <property type="match status" value="1"/>
</dbReference>
<dbReference type="Pfam" id="PF00953">
    <property type="entry name" value="Glycos_transf_4"/>
    <property type="match status" value="1"/>
</dbReference>
<dbReference type="Pfam" id="PF10555">
    <property type="entry name" value="MraY_sig1"/>
    <property type="match status" value="1"/>
</dbReference>
<dbReference type="PROSITE" id="PS01347">
    <property type="entry name" value="MRAY_1"/>
    <property type="match status" value="1"/>
</dbReference>
<dbReference type="PROSITE" id="PS01348">
    <property type="entry name" value="MRAY_2"/>
    <property type="match status" value="1"/>
</dbReference>
<protein>
    <recommendedName>
        <fullName evidence="1">Phospho-N-acetylmuramoyl-pentapeptide-transferase</fullName>
        <ecNumber evidence="1">2.7.8.13</ecNumber>
    </recommendedName>
    <alternativeName>
        <fullName evidence="1">UDP-MurNAc-pentapeptide phosphotransferase</fullName>
    </alternativeName>
</protein>
<name>MRAY_CUPPJ</name>
<organism>
    <name type="scientific">Cupriavidus pinatubonensis (strain JMP 134 / LMG 1197)</name>
    <name type="common">Cupriavidus necator (strain JMP 134)</name>
    <dbReference type="NCBI Taxonomy" id="264198"/>
    <lineage>
        <taxon>Bacteria</taxon>
        <taxon>Pseudomonadati</taxon>
        <taxon>Pseudomonadota</taxon>
        <taxon>Betaproteobacteria</taxon>
        <taxon>Burkholderiales</taxon>
        <taxon>Burkholderiaceae</taxon>
        <taxon>Cupriavidus</taxon>
    </lineage>
</organism>
<feature type="chain" id="PRO_0000235474" description="Phospho-N-acetylmuramoyl-pentapeptide-transferase">
    <location>
        <begin position="1"/>
        <end position="389"/>
    </location>
</feature>
<feature type="transmembrane region" description="Helical" evidence="1">
    <location>
        <begin position="25"/>
        <end position="45"/>
    </location>
</feature>
<feature type="transmembrane region" description="Helical" evidence="1">
    <location>
        <begin position="74"/>
        <end position="94"/>
    </location>
</feature>
<feature type="transmembrane region" description="Helical" evidence="1">
    <location>
        <begin position="97"/>
        <end position="117"/>
    </location>
</feature>
<feature type="transmembrane region" description="Helical" evidence="1">
    <location>
        <begin position="134"/>
        <end position="154"/>
    </location>
</feature>
<feature type="transmembrane region" description="Helical" evidence="1">
    <location>
        <begin position="190"/>
        <end position="210"/>
    </location>
</feature>
<feature type="transmembrane region" description="Helical" evidence="1">
    <location>
        <begin position="222"/>
        <end position="242"/>
    </location>
</feature>
<feature type="transmembrane region" description="Helical" evidence="1">
    <location>
        <begin position="259"/>
        <end position="279"/>
    </location>
</feature>
<feature type="transmembrane region" description="Helical" evidence="1">
    <location>
        <begin position="286"/>
        <end position="306"/>
    </location>
</feature>
<feature type="transmembrane region" description="Helical" evidence="1">
    <location>
        <begin position="311"/>
        <end position="331"/>
    </location>
</feature>
<feature type="transmembrane region" description="Helical" evidence="1">
    <location>
        <begin position="366"/>
        <end position="386"/>
    </location>
</feature>
<sequence>MLLALAQWLQNDYSFLRVVNYLTFRAVMANLTALVIGLAAGPWVIRKLTELKVGQAVRTIGPQTHLVKSGTPTMGGVLVLVSIAISTVLWCDWGNRFIWVVMLVTLGYGAIGWVDDYRKVVYRDPRGMSSREKFFWQTLIGLVAAVYLAFSVSESSNVRVWDLFLSWVEGGLSLDMPYKSNLIVPFFKEVSYPLGVAGFIVLTYLVIVGSSNAVNLTDGLDGLVIMPVVLVGGALGAFAYVMGSSVYSKYLLFPHIPGAGELLIFCSAMAGAGLAFLWFNAHPAQVFMGDVGALALGGALGTVAVIVRQEIVLFVMGGIFVVETVSVMLQVTWFKITKRRYGEGRRLFRMAPLHHHFELSGWKETQVTVRFWIVTMLLVLIGLSTLKLR</sequence>